<keyword id="KW-0458">Lysosome</keyword>
<keyword id="KW-0472">Membrane</keyword>
<keyword id="KW-1185">Reference proteome</keyword>
<protein>
    <recommendedName>
        <fullName>Vacuolar fusion protein CCZ1 homolog</fullName>
    </recommendedName>
</protein>
<accession>Q7T102</accession>
<comment type="subcellular location">
    <subcellularLocation>
        <location evidence="1">Lysosome membrane</location>
    </subcellularLocation>
</comment>
<comment type="similarity">
    <text evidence="2">Belongs to the CCZ1 family.</text>
</comment>
<sequence>MAFAGQDKRYAPSLLSFFIYNPKFGPREGEEEKKILFYHPNEVEQNEKIRNVGLCEAIVQFTRTFNPTKPAKSLHTQKNRQFFHEPEEGFWMVMVVKNPVAEKQKDGKTVLEYQEDELLDKVYSSVLQQCYRMYKLFNGTFGRAMEVGQVELLKDRLEKFFHRYLQTLHLHSCDLLDVFGGISFFPLDKMTYLKVQSFINRIEESLNIVKYTAFLYNDQLIWSGLEQEDMRILYKYLTTTLFPRYTEPELAGRDSPIRPEMPGNLQHYGRFLTGPLNLNDSEVKFRFPKIFVNTEDSYEELHLIVYKAMSASVCFMIDASVQLTVDFCRKLDSLVGPQLTVLASDICEQYNSNRRISGSEKEPQFKFIYFNHMNLAEKSTIHLRKTPNMSLTSVQPELMKILGDINSDFTRVDEDEEIIVKAMSDYWVVGKKSDQRELYVILNQKNSNLIEVNEEIKKLCATHFSNIFFLD</sequence>
<proteinExistence type="evidence at transcript level"/>
<gene>
    <name type="primary">ccz1</name>
</gene>
<name>CCZ1_XENLA</name>
<reference key="1">
    <citation type="submission" date="2003-08" db="EMBL/GenBank/DDBJ databases">
        <authorList>
            <consortium name="NIH - Xenopus Gene Collection (XGC) project"/>
        </authorList>
    </citation>
    <scope>NUCLEOTIDE SEQUENCE [LARGE SCALE MRNA]</scope>
    <source>
        <tissue>Lung</tissue>
    </source>
</reference>
<feature type="chain" id="PRO_0000327403" description="Vacuolar fusion protein CCZ1 homolog">
    <location>
        <begin position="1"/>
        <end position="471"/>
    </location>
</feature>
<evidence type="ECO:0000250" key="1"/>
<evidence type="ECO:0000305" key="2"/>
<organism>
    <name type="scientific">Xenopus laevis</name>
    <name type="common">African clawed frog</name>
    <dbReference type="NCBI Taxonomy" id="8355"/>
    <lineage>
        <taxon>Eukaryota</taxon>
        <taxon>Metazoa</taxon>
        <taxon>Chordata</taxon>
        <taxon>Craniata</taxon>
        <taxon>Vertebrata</taxon>
        <taxon>Euteleostomi</taxon>
        <taxon>Amphibia</taxon>
        <taxon>Batrachia</taxon>
        <taxon>Anura</taxon>
        <taxon>Pipoidea</taxon>
        <taxon>Pipidae</taxon>
        <taxon>Xenopodinae</taxon>
        <taxon>Xenopus</taxon>
        <taxon>Xenopus</taxon>
    </lineage>
</organism>
<dbReference type="EMBL" id="BC055965">
    <property type="protein sequence ID" value="AAH55965.1"/>
    <property type="molecule type" value="mRNA"/>
</dbReference>
<dbReference type="RefSeq" id="NP_001080322.1">
    <property type="nucleotide sequence ID" value="NM_001086853.1"/>
</dbReference>
<dbReference type="RefSeq" id="XP_018092724.1">
    <property type="nucleotide sequence ID" value="XM_018237235.1"/>
</dbReference>
<dbReference type="RefSeq" id="XP_018092725.1">
    <property type="nucleotide sequence ID" value="XM_018237236.1"/>
</dbReference>
<dbReference type="RefSeq" id="XP_018092726.1">
    <property type="nucleotide sequence ID" value="XM_018237237.1"/>
</dbReference>
<dbReference type="SMR" id="Q7T102"/>
<dbReference type="DNASU" id="380014"/>
<dbReference type="GeneID" id="380014"/>
<dbReference type="KEGG" id="xla:380014"/>
<dbReference type="AGR" id="Xenbase:XB-GENE-941319"/>
<dbReference type="CTD" id="380014"/>
<dbReference type="OMA" id="CEEQMKG"/>
<dbReference type="OrthoDB" id="240546at2759"/>
<dbReference type="Proteomes" id="UP000186698">
    <property type="component" value="Chromosome 9_10S"/>
</dbReference>
<dbReference type="Bgee" id="380014">
    <property type="expression patterns" value="Expressed in gastrula and 19 other cell types or tissues"/>
</dbReference>
<dbReference type="GO" id="GO:0043231">
    <property type="term" value="C:intracellular membrane-bounded organelle"/>
    <property type="evidence" value="ECO:0000318"/>
    <property type="project" value="GO_Central"/>
</dbReference>
<dbReference type="GO" id="GO:0005765">
    <property type="term" value="C:lysosomal membrane"/>
    <property type="evidence" value="ECO:0007669"/>
    <property type="project" value="UniProtKB-SubCell"/>
</dbReference>
<dbReference type="GO" id="GO:0035658">
    <property type="term" value="C:Mon1-Ccz1 complex"/>
    <property type="evidence" value="ECO:0007669"/>
    <property type="project" value="InterPro"/>
</dbReference>
<dbReference type="GO" id="GO:0016192">
    <property type="term" value="P:vesicle-mediated transport"/>
    <property type="evidence" value="ECO:0000318"/>
    <property type="project" value="GO_Central"/>
</dbReference>
<dbReference type="InterPro" id="IPR013176">
    <property type="entry name" value="Ccz1"/>
</dbReference>
<dbReference type="InterPro" id="IPR043987">
    <property type="entry name" value="CCZ1/INTU/HSP4_longin_1"/>
</dbReference>
<dbReference type="InterPro" id="IPR043989">
    <property type="entry name" value="CCZ1/INTU/HSP4_longin_3"/>
</dbReference>
<dbReference type="InterPro" id="IPR043988">
    <property type="entry name" value="CCZ1/INTU_longin_2"/>
</dbReference>
<dbReference type="PANTHER" id="PTHR13056">
    <property type="entry name" value="VACUOLAR FUSION PROTEIN CCZ1 HOMOLOG-RELATED"/>
    <property type="match status" value="1"/>
</dbReference>
<dbReference type="PANTHER" id="PTHR13056:SF0">
    <property type="entry name" value="VACUOLAR FUSION PROTEIN CCZ1 HOMOLOG-RELATED"/>
    <property type="match status" value="1"/>
</dbReference>
<dbReference type="Pfam" id="PF19031">
    <property type="entry name" value="Intu_longin_1"/>
    <property type="match status" value="1"/>
</dbReference>
<dbReference type="Pfam" id="PF19032">
    <property type="entry name" value="Intu_longin_2"/>
    <property type="match status" value="1"/>
</dbReference>
<dbReference type="Pfam" id="PF19033">
    <property type="entry name" value="Intu_longin_3"/>
    <property type="match status" value="1"/>
</dbReference>